<proteinExistence type="evidence at protein level"/>
<feature type="chain" id="PRO_0000310959" description="Myc target protein 1">
    <location>
        <begin position="1"/>
        <end position="235"/>
    </location>
</feature>
<feature type="short sequence motif" description="Bipartite nuclear localization signal" evidence="3">
    <location>
        <begin position="95"/>
        <end position="113"/>
    </location>
</feature>
<feature type="modified residue" description="Phosphoserine" evidence="2">
    <location>
        <position position="135"/>
    </location>
</feature>
<feature type="modified residue" description="Phosphoserine" evidence="2">
    <location>
        <position position="138"/>
    </location>
</feature>
<feature type="modified residue" description="Phosphoserine" evidence="2">
    <location>
        <position position="141"/>
    </location>
</feature>
<feature type="modified residue" description="Phosphoserine" evidence="2">
    <location>
        <position position="149"/>
    </location>
</feature>
<feature type="sequence variant" id="VAR_037115" description="In dbSNP:rs17710008.">
    <original>G</original>
    <variation>S</variation>
    <location>
        <position position="119"/>
    </location>
</feature>
<feature type="sequence variant" id="VAR_037116" description="In dbSNP:rs17852097." evidence="5">
    <original>R</original>
    <variation>G</variation>
    <location>
        <position position="127"/>
    </location>
</feature>
<feature type="sequence conflict" description="In Ref. 2; BAB15035." evidence="6" ref="2">
    <original>Q</original>
    <variation>R</variation>
    <location>
        <position position="147"/>
    </location>
</feature>
<reference key="1">
    <citation type="journal article" date="2003" name="Zhonghua Yi Xue Yi Chuan Xue Za Zhi">
        <title>Cloning and characterization of MTLC, a novel gene in 6q25.</title>
        <authorList>
            <person name="Qiu G.-B."/>
            <person name="Qiu G."/>
            <person name="Xu Z."/>
            <person name="Huang D."/>
            <person name="Gong L.-G."/>
            <person name="Li C."/>
            <person name="Sun X."/>
            <person name="Sun K.-L."/>
        </authorList>
    </citation>
    <scope>NUCLEOTIDE SEQUENCE [MRNA]</scope>
    <scope>SUBCELLULAR LOCATION</scope>
    <source>
        <tissue>Laryngeal carcinoma</tissue>
    </source>
</reference>
<reference key="2">
    <citation type="journal article" date="2004" name="Nat. Genet.">
        <title>Complete sequencing and characterization of 21,243 full-length human cDNAs.</title>
        <authorList>
            <person name="Ota T."/>
            <person name="Suzuki Y."/>
            <person name="Nishikawa T."/>
            <person name="Otsuki T."/>
            <person name="Sugiyama T."/>
            <person name="Irie R."/>
            <person name="Wakamatsu A."/>
            <person name="Hayashi K."/>
            <person name="Sato H."/>
            <person name="Nagai K."/>
            <person name="Kimura K."/>
            <person name="Makita H."/>
            <person name="Sekine M."/>
            <person name="Obayashi M."/>
            <person name="Nishi T."/>
            <person name="Shibahara T."/>
            <person name="Tanaka T."/>
            <person name="Ishii S."/>
            <person name="Yamamoto J."/>
            <person name="Saito K."/>
            <person name="Kawai Y."/>
            <person name="Isono Y."/>
            <person name="Nakamura Y."/>
            <person name="Nagahari K."/>
            <person name="Murakami K."/>
            <person name="Yasuda T."/>
            <person name="Iwayanagi T."/>
            <person name="Wagatsuma M."/>
            <person name="Shiratori A."/>
            <person name="Sudo H."/>
            <person name="Hosoiri T."/>
            <person name="Kaku Y."/>
            <person name="Kodaira H."/>
            <person name="Kondo H."/>
            <person name="Sugawara M."/>
            <person name="Takahashi M."/>
            <person name="Kanda K."/>
            <person name="Yokoi T."/>
            <person name="Furuya T."/>
            <person name="Kikkawa E."/>
            <person name="Omura Y."/>
            <person name="Abe K."/>
            <person name="Kamihara K."/>
            <person name="Katsuta N."/>
            <person name="Sato K."/>
            <person name="Tanikawa M."/>
            <person name="Yamazaki M."/>
            <person name="Ninomiya K."/>
            <person name="Ishibashi T."/>
            <person name="Yamashita H."/>
            <person name="Murakawa K."/>
            <person name="Fujimori K."/>
            <person name="Tanai H."/>
            <person name="Kimata M."/>
            <person name="Watanabe M."/>
            <person name="Hiraoka S."/>
            <person name="Chiba Y."/>
            <person name="Ishida S."/>
            <person name="Ono Y."/>
            <person name="Takiguchi S."/>
            <person name="Watanabe S."/>
            <person name="Yosida M."/>
            <person name="Hotuta T."/>
            <person name="Kusano J."/>
            <person name="Kanehori K."/>
            <person name="Takahashi-Fujii A."/>
            <person name="Hara H."/>
            <person name="Tanase T.-O."/>
            <person name="Nomura Y."/>
            <person name="Togiya S."/>
            <person name="Komai F."/>
            <person name="Hara R."/>
            <person name="Takeuchi K."/>
            <person name="Arita M."/>
            <person name="Imose N."/>
            <person name="Musashino K."/>
            <person name="Yuuki H."/>
            <person name="Oshima A."/>
            <person name="Sasaki N."/>
            <person name="Aotsuka S."/>
            <person name="Yoshikawa Y."/>
            <person name="Matsunawa H."/>
            <person name="Ichihara T."/>
            <person name="Shiohata N."/>
            <person name="Sano S."/>
            <person name="Moriya S."/>
            <person name="Momiyama H."/>
            <person name="Satoh N."/>
            <person name="Takami S."/>
            <person name="Terashima Y."/>
            <person name="Suzuki O."/>
            <person name="Nakagawa S."/>
            <person name="Senoh A."/>
            <person name="Mizoguchi H."/>
            <person name="Goto Y."/>
            <person name="Shimizu F."/>
            <person name="Wakebe H."/>
            <person name="Hishigaki H."/>
            <person name="Watanabe T."/>
            <person name="Sugiyama A."/>
            <person name="Takemoto M."/>
            <person name="Kawakami B."/>
            <person name="Yamazaki M."/>
            <person name="Watanabe K."/>
            <person name="Kumagai A."/>
            <person name="Itakura S."/>
            <person name="Fukuzumi Y."/>
            <person name="Fujimori Y."/>
            <person name="Komiyama M."/>
            <person name="Tashiro H."/>
            <person name="Tanigami A."/>
            <person name="Fujiwara T."/>
            <person name="Ono T."/>
            <person name="Yamada K."/>
            <person name="Fujii Y."/>
            <person name="Ozaki K."/>
            <person name="Hirao M."/>
            <person name="Ohmori Y."/>
            <person name="Kawabata A."/>
            <person name="Hikiji T."/>
            <person name="Kobatake N."/>
            <person name="Inagaki H."/>
            <person name="Ikema Y."/>
            <person name="Okamoto S."/>
            <person name="Okitani R."/>
            <person name="Kawakami T."/>
            <person name="Noguchi S."/>
            <person name="Itoh T."/>
            <person name="Shigeta K."/>
            <person name="Senba T."/>
            <person name="Matsumura K."/>
            <person name="Nakajima Y."/>
            <person name="Mizuno T."/>
            <person name="Morinaga M."/>
            <person name="Sasaki M."/>
            <person name="Togashi T."/>
            <person name="Oyama M."/>
            <person name="Hata H."/>
            <person name="Watanabe M."/>
            <person name="Komatsu T."/>
            <person name="Mizushima-Sugano J."/>
            <person name="Satoh T."/>
            <person name="Shirai Y."/>
            <person name="Takahashi Y."/>
            <person name="Nakagawa K."/>
            <person name="Okumura K."/>
            <person name="Nagase T."/>
            <person name="Nomura N."/>
            <person name="Kikuchi H."/>
            <person name="Masuho Y."/>
            <person name="Yamashita R."/>
            <person name="Nakai K."/>
            <person name="Yada T."/>
            <person name="Nakamura Y."/>
            <person name="Ohara O."/>
            <person name="Isogai T."/>
            <person name="Sugano S."/>
        </authorList>
    </citation>
    <scope>NUCLEOTIDE SEQUENCE [LARGE SCALE MRNA]</scope>
    <source>
        <tissue>Colon</tissue>
    </source>
</reference>
<reference key="3">
    <citation type="journal article" date="2003" name="Nature">
        <title>The DNA sequence and analysis of human chromosome 6.</title>
        <authorList>
            <person name="Mungall A.J."/>
            <person name="Palmer S.A."/>
            <person name="Sims S.K."/>
            <person name="Edwards C.A."/>
            <person name="Ashurst J.L."/>
            <person name="Wilming L."/>
            <person name="Jones M.C."/>
            <person name="Horton R."/>
            <person name="Hunt S.E."/>
            <person name="Scott C.E."/>
            <person name="Gilbert J.G.R."/>
            <person name="Clamp M.E."/>
            <person name="Bethel G."/>
            <person name="Milne S."/>
            <person name="Ainscough R."/>
            <person name="Almeida J.P."/>
            <person name="Ambrose K.D."/>
            <person name="Andrews T.D."/>
            <person name="Ashwell R.I.S."/>
            <person name="Babbage A.K."/>
            <person name="Bagguley C.L."/>
            <person name="Bailey J."/>
            <person name="Banerjee R."/>
            <person name="Barker D.J."/>
            <person name="Barlow K.F."/>
            <person name="Bates K."/>
            <person name="Beare D.M."/>
            <person name="Beasley H."/>
            <person name="Beasley O."/>
            <person name="Bird C.P."/>
            <person name="Blakey S.E."/>
            <person name="Bray-Allen S."/>
            <person name="Brook J."/>
            <person name="Brown A.J."/>
            <person name="Brown J.Y."/>
            <person name="Burford D.C."/>
            <person name="Burrill W."/>
            <person name="Burton J."/>
            <person name="Carder C."/>
            <person name="Carter N.P."/>
            <person name="Chapman J.C."/>
            <person name="Clark S.Y."/>
            <person name="Clark G."/>
            <person name="Clee C.M."/>
            <person name="Clegg S."/>
            <person name="Cobley V."/>
            <person name="Collier R.E."/>
            <person name="Collins J.E."/>
            <person name="Colman L.K."/>
            <person name="Corby N.R."/>
            <person name="Coville G.J."/>
            <person name="Culley K.M."/>
            <person name="Dhami P."/>
            <person name="Davies J."/>
            <person name="Dunn M."/>
            <person name="Earthrowl M.E."/>
            <person name="Ellington A.E."/>
            <person name="Evans K.A."/>
            <person name="Faulkner L."/>
            <person name="Francis M.D."/>
            <person name="Frankish A."/>
            <person name="Frankland J."/>
            <person name="French L."/>
            <person name="Garner P."/>
            <person name="Garnett J."/>
            <person name="Ghori M.J."/>
            <person name="Gilby L.M."/>
            <person name="Gillson C.J."/>
            <person name="Glithero R.J."/>
            <person name="Grafham D.V."/>
            <person name="Grant M."/>
            <person name="Gribble S."/>
            <person name="Griffiths C."/>
            <person name="Griffiths M.N.D."/>
            <person name="Hall R."/>
            <person name="Halls K.S."/>
            <person name="Hammond S."/>
            <person name="Harley J.L."/>
            <person name="Hart E.A."/>
            <person name="Heath P.D."/>
            <person name="Heathcott R."/>
            <person name="Holmes S.J."/>
            <person name="Howden P.J."/>
            <person name="Howe K.L."/>
            <person name="Howell G.R."/>
            <person name="Huckle E."/>
            <person name="Humphray S.J."/>
            <person name="Humphries M.D."/>
            <person name="Hunt A.R."/>
            <person name="Johnson C.M."/>
            <person name="Joy A.A."/>
            <person name="Kay M."/>
            <person name="Keenan S.J."/>
            <person name="Kimberley A.M."/>
            <person name="King A."/>
            <person name="Laird G.K."/>
            <person name="Langford C."/>
            <person name="Lawlor S."/>
            <person name="Leongamornlert D.A."/>
            <person name="Leversha M."/>
            <person name="Lloyd C.R."/>
            <person name="Lloyd D.M."/>
            <person name="Loveland J.E."/>
            <person name="Lovell J."/>
            <person name="Martin S."/>
            <person name="Mashreghi-Mohammadi M."/>
            <person name="Maslen G.L."/>
            <person name="Matthews L."/>
            <person name="McCann O.T."/>
            <person name="McLaren S.J."/>
            <person name="McLay K."/>
            <person name="McMurray A."/>
            <person name="Moore M.J.F."/>
            <person name="Mullikin J.C."/>
            <person name="Niblett D."/>
            <person name="Nickerson T."/>
            <person name="Novik K.L."/>
            <person name="Oliver K."/>
            <person name="Overton-Larty E.K."/>
            <person name="Parker A."/>
            <person name="Patel R."/>
            <person name="Pearce A.V."/>
            <person name="Peck A.I."/>
            <person name="Phillimore B.J.C.T."/>
            <person name="Phillips S."/>
            <person name="Plumb R.W."/>
            <person name="Porter K.M."/>
            <person name="Ramsey Y."/>
            <person name="Ranby S.A."/>
            <person name="Rice C.M."/>
            <person name="Ross M.T."/>
            <person name="Searle S.M."/>
            <person name="Sehra H.K."/>
            <person name="Sheridan E."/>
            <person name="Skuce C.D."/>
            <person name="Smith S."/>
            <person name="Smith M."/>
            <person name="Spraggon L."/>
            <person name="Squares S.L."/>
            <person name="Steward C.A."/>
            <person name="Sycamore N."/>
            <person name="Tamlyn-Hall G."/>
            <person name="Tester J."/>
            <person name="Theaker A.J."/>
            <person name="Thomas D.W."/>
            <person name="Thorpe A."/>
            <person name="Tracey A."/>
            <person name="Tromans A."/>
            <person name="Tubby B."/>
            <person name="Wall M."/>
            <person name="Wallis J.M."/>
            <person name="West A.P."/>
            <person name="White S.S."/>
            <person name="Whitehead S.L."/>
            <person name="Whittaker H."/>
            <person name="Wild A."/>
            <person name="Willey D.J."/>
            <person name="Wilmer T.E."/>
            <person name="Wood J.M."/>
            <person name="Wray P.W."/>
            <person name="Wyatt J.C."/>
            <person name="Young L."/>
            <person name="Younger R.M."/>
            <person name="Bentley D.R."/>
            <person name="Coulson A."/>
            <person name="Durbin R.M."/>
            <person name="Hubbard T."/>
            <person name="Sulston J.E."/>
            <person name="Dunham I."/>
            <person name="Rogers J."/>
            <person name="Beck S."/>
        </authorList>
    </citation>
    <scope>NUCLEOTIDE SEQUENCE [LARGE SCALE GENOMIC DNA]</scope>
</reference>
<reference key="4">
    <citation type="submission" date="2005-09" db="EMBL/GenBank/DDBJ databases">
        <authorList>
            <person name="Mural R.J."/>
            <person name="Istrail S."/>
            <person name="Sutton G.G."/>
            <person name="Florea L."/>
            <person name="Halpern A.L."/>
            <person name="Mobarry C.M."/>
            <person name="Lippert R."/>
            <person name="Walenz B."/>
            <person name="Shatkay H."/>
            <person name="Dew I."/>
            <person name="Miller J.R."/>
            <person name="Flanigan M.J."/>
            <person name="Edwards N.J."/>
            <person name="Bolanos R."/>
            <person name="Fasulo D."/>
            <person name="Halldorsson B.V."/>
            <person name="Hannenhalli S."/>
            <person name="Turner R."/>
            <person name="Yooseph S."/>
            <person name="Lu F."/>
            <person name="Nusskern D.R."/>
            <person name="Shue B.C."/>
            <person name="Zheng X.H."/>
            <person name="Zhong F."/>
            <person name="Delcher A.L."/>
            <person name="Huson D.H."/>
            <person name="Kravitz S.A."/>
            <person name="Mouchard L."/>
            <person name="Reinert K."/>
            <person name="Remington K.A."/>
            <person name="Clark A.G."/>
            <person name="Waterman M.S."/>
            <person name="Eichler E.E."/>
            <person name="Adams M.D."/>
            <person name="Hunkapiller M.W."/>
            <person name="Myers E.W."/>
            <person name="Venter J.C."/>
        </authorList>
    </citation>
    <scope>NUCLEOTIDE SEQUENCE [LARGE SCALE GENOMIC DNA]</scope>
</reference>
<reference key="5">
    <citation type="journal article" date="2004" name="Genome Res.">
        <title>The status, quality, and expansion of the NIH full-length cDNA project: the Mammalian Gene Collection (MGC).</title>
        <authorList>
            <consortium name="The MGC Project Team"/>
        </authorList>
    </citation>
    <scope>NUCLEOTIDE SEQUENCE [LARGE SCALE MRNA]</scope>
    <scope>VARIANT GLY-127</scope>
    <source>
        <tissue>Brain</tissue>
    </source>
</reference>
<reference key="6">
    <citation type="journal article" date="2007" name="BMC Genomics">
        <title>The full-ORF clone resource of the German cDNA consortium.</title>
        <authorList>
            <person name="Bechtel S."/>
            <person name="Rosenfelder H."/>
            <person name="Duda A."/>
            <person name="Schmidt C.P."/>
            <person name="Ernst U."/>
            <person name="Wellenreuther R."/>
            <person name="Mehrle A."/>
            <person name="Schuster C."/>
            <person name="Bahr A."/>
            <person name="Bloecker H."/>
            <person name="Heubner D."/>
            <person name="Hoerlein A."/>
            <person name="Michel G."/>
            <person name="Wedler H."/>
            <person name="Koehrer K."/>
            <person name="Ottenwaelder B."/>
            <person name="Poustka A."/>
            <person name="Wiemann S."/>
            <person name="Schupp I."/>
        </authorList>
    </citation>
    <scope>NUCLEOTIDE SEQUENCE [LARGE SCALE MRNA] OF 32-235</scope>
    <source>
        <tissue>Amygdala</tissue>
    </source>
</reference>
<reference key="7">
    <citation type="journal article" date="2003" name="World J. Gastroenterol.">
        <title>Expression of MTLC gene in gastric carcinoma.</title>
        <authorList>
            <person name="Qiu G.-B."/>
            <person name="Gong L.-G."/>
            <person name="Hao D.-M."/>
            <person name="Zhen Z.-H."/>
            <person name="Sun K.-L."/>
        </authorList>
    </citation>
    <scope>EXPRESSION IN GASTRIC CARCINOMA</scope>
</reference>
<reference key="8">
    <citation type="journal article" date="2014" name="J. Proteomics">
        <title>An enzyme assisted RP-RPLC approach for in-depth analysis of human liver phosphoproteome.</title>
        <authorList>
            <person name="Bian Y."/>
            <person name="Song C."/>
            <person name="Cheng K."/>
            <person name="Dong M."/>
            <person name="Wang F."/>
            <person name="Huang J."/>
            <person name="Sun D."/>
            <person name="Wang L."/>
            <person name="Ye M."/>
            <person name="Zou H."/>
        </authorList>
    </citation>
    <scope>IDENTIFICATION BY MASS SPECTROMETRY [LARGE SCALE ANALYSIS]</scope>
    <source>
        <tissue>Liver</tissue>
    </source>
</reference>
<protein>
    <recommendedName>
        <fullName>Myc target protein 1</fullName>
    </recommendedName>
    <alternativeName>
        <fullName>Myc target in myeloid cells protein 1</fullName>
    </alternativeName>
</protein>
<name>MYCT1_HUMAN</name>
<keyword id="KW-0539">Nucleus</keyword>
<keyword id="KW-0597">Phosphoprotein</keyword>
<keyword id="KW-1267">Proteomics identification</keyword>
<keyword id="KW-1185">Reference proteome</keyword>
<organism>
    <name type="scientific">Homo sapiens</name>
    <name type="common">Human</name>
    <dbReference type="NCBI Taxonomy" id="9606"/>
    <lineage>
        <taxon>Eukaryota</taxon>
        <taxon>Metazoa</taxon>
        <taxon>Chordata</taxon>
        <taxon>Craniata</taxon>
        <taxon>Vertebrata</taxon>
        <taxon>Euteleostomi</taxon>
        <taxon>Mammalia</taxon>
        <taxon>Eutheria</taxon>
        <taxon>Euarchontoglires</taxon>
        <taxon>Primates</taxon>
        <taxon>Haplorrhini</taxon>
        <taxon>Catarrhini</taxon>
        <taxon>Hominidae</taxon>
        <taxon>Homo</taxon>
    </lineage>
</organism>
<accession>Q8N699</accession>
<accession>Q8N396</accession>
<accession>Q8TBE8</accession>
<accession>Q9H763</accession>
<evidence type="ECO:0000250" key="1"/>
<evidence type="ECO:0000250" key="2">
    <source>
        <dbReference type="UniProtKB" id="Q8R411"/>
    </source>
</evidence>
<evidence type="ECO:0000255" key="3"/>
<evidence type="ECO:0000269" key="4">
    <source>
    </source>
</evidence>
<evidence type="ECO:0000269" key="5">
    <source>
    </source>
</evidence>
<evidence type="ECO:0000305" key="6"/>
<sequence>MRTQVYEGLCKNYFSLAVLQRDRIKLLFFDILVFLSVFLLFLLFLVDIMANNTTSLGSPWPENFWEDLIMSFTVSMAIGLVLGGFIWAVFICLSRRRRASAPISQWSSSRRSRSSYTHGLNRTGFYRHSGCERRSNLSLASLTFQRQASLEQANSFPRKSSFRASTFHPFLQCPPLPVETESQLVTLPSSNISPTISTSHSLSRPDYWSSNSLRVGLSTPPPPAYESIIKAFPDS</sequence>
<dbReference type="EMBL" id="AF527367">
    <property type="protein sequence ID" value="AAM88866.1"/>
    <property type="molecule type" value="mRNA"/>
</dbReference>
<dbReference type="EMBL" id="AK024922">
    <property type="protein sequence ID" value="BAB15035.1"/>
    <property type="molecule type" value="mRNA"/>
</dbReference>
<dbReference type="EMBL" id="AL390960">
    <property type="status" value="NOT_ANNOTATED_CDS"/>
    <property type="molecule type" value="Genomic_DNA"/>
</dbReference>
<dbReference type="EMBL" id="CH471051">
    <property type="protein sequence ID" value="EAW47726.1"/>
    <property type="molecule type" value="Genomic_DNA"/>
</dbReference>
<dbReference type="EMBL" id="BC022556">
    <property type="protein sequence ID" value="AAH22556.2"/>
    <property type="molecule type" value="mRNA"/>
</dbReference>
<dbReference type="EMBL" id="BC128463">
    <property type="protein sequence ID" value="AAI28464.1"/>
    <property type="molecule type" value="mRNA"/>
</dbReference>
<dbReference type="EMBL" id="BC128464">
    <property type="protein sequence ID" value="AAI28465.1"/>
    <property type="molecule type" value="mRNA"/>
</dbReference>
<dbReference type="EMBL" id="AL834500">
    <property type="protein sequence ID" value="CAD39158.3"/>
    <property type="molecule type" value="mRNA"/>
</dbReference>
<dbReference type="CCDS" id="CCDS5239.1"/>
<dbReference type="RefSeq" id="NP_079383.2">
    <property type="nucleotide sequence ID" value="NM_025107.3"/>
</dbReference>
<dbReference type="RefSeq" id="XP_011534451.1">
    <property type="nucleotide sequence ID" value="XM_011536149.2"/>
</dbReference>
<dbReference type="RefSeq" id="XP_011534452.1">
    <property type="nucleotide sequence ID" value="XM_011536150.2"/>
</dbReference>
<dbReference type="RefSeq" id="XP_011534453.1">
    <property type="nucleotide sequence ID" value="XM_011536151.2"/>
</dbReference>
<dbReference type="RefSeq" id="XP_011534454.1">
    <property type="nucleotide sequence ID" value="XM_011536152.2"/>
</dbReference>
<dbReference type="RefSeq" id="XP_016866808.1">
    <property type="nucleotide sequence ID" value="XM_017011319.1"/>
</dbReference>
<dbReference type="BioGRID" id="123159">
    <property type="interactions" value="11"/>
</dbReference>
<dbReference type="FunCoup" id="Q8N699">
    <property type="interactions" value="628"/>
</dbReference>
<dbReference type="IntAct" id="Q8N699">
    <property type="interactions" value="14"/>
</dbReference>
<dbReference type="MINT" id="Q8N699"/>
<dbReference type="STRING" id="9606.ENSP00000356214"/>
<dbReference type="iPTMnet" id="Q8N699"/>
<dbReference type="PhosphoSitePlus" id="Q8N699"/>
<dbReference type="SwissPalm" id="Q8N699"/>
<dbReference type="BioMuta" id="MYCT1"/>
<dbReference type="DMDM" id="74751049"/>
<dbReference type="MassIVE" id="Q8N699"/>
<dbReference type="PaxDb" id="9606-ENSP00000356214"/>
<dbReference type="PeptideAtlas" id="Q8N699"/>
<dbReference type="ProteomicsDB" id="72150"/>
<dbReference type="Antibodypedia" id="55356">
    <property type="antibodies" value="127 antibodies from 23 providers"/>
</dbReference>
<dbReference type="DNASU" id="80177"/>
<dbReference type="Ensembl" id="ENST00000367245.6">
    <property type="protein sequence ID" value="ENSP00000356214.5"/>
    <property type="gene ID" value="ENSG00000120279.7"/>
</dbReference>
<dbReference type="GeneID" id="80177"/>
<dbReference type="KEGG" id="hsa:80177"/>
<dbReference type="MANE-Select" id="ENST00000367245.6">
    <property type="protein sequence ID" value="ENSP00000356214.5"/>
    <property type="RefSeq nucleotide sequence ID" value="NM_025107.3"/>
    <property type="RefSeq protein sequence ID" value="NP_079383.2"/>
</dbReference>
<dbReference type="UCSC" id="uc003qpc.5">
    <property type="organism name" value="human"/>
</dbReference>
<dbReference type="AGR" id="HGNC:23172"/>
<dbReference type="CTD" id="80177"/>
<dbReference type="DisGeNET" id="80177"/>
<dbReference type="GeneCards" id="MYCT1"/>
<dbReference type="HGNC" id="HGNC:23172">
    <property type="gene designation" value="MYCT1"/>
</dbReference>
<dbReference type="HPA" id="ENSG00000120279">
    <property type="expression patterns" value="Tissue enhanced (lymphoid)"/>
</dbReference>
<dbReference type="neXtProt" id="NX_Q8N699"/>
<dbReference type="OpenTargets" id="ENSG00000120279"/>
<dbReference type="PharmGKB" id="PA134908917"/>
<dbReference type="VEuPathDB" id="HostDB:ENSG00000120279"/>
<dbReference type="eggNOG" id="ENOG502RXWU">
    <property type="taxonomic scope" value="Eukaryota"/>
</dbReference>
<dbReference type="GeneTree" id="ENSGT00390000011642"/>
<dbReference type="InParanoid" id="Q8N699"/>
<dbReference type="OMA" id="SFWGNNG"/>
<dbReference type="OrthoDB" id="9943706at2759"/>
<dbReference type="PAN-GO" id="Q8N699">
    <property type="GO annotations" value="1 GO annotation based on evolutionary models"/>
</dbReference>
<dbReference type="PhylomeDB" id="Q8N699"/>
<dbReference type="TreeFam" id="TF333196"/>
<dbReference type="PathwayCommons" id="Q8N699"/>
<dbReference type="SignaLink" id="Q8N699"/>
<dbReference type="SIGNOR" id="Q8N699"/>
<dbReference type="BioGRID-ORCS" id="80177">
    <property type="hits" value="16 hits in 1149 CRISPR screens"/>
</dbReference>
<dbReference type="ChiTaRS" id="MYCT1">
    <property type="organism name" value="human"/>
</dbReference>
<dbReference type="GenomeRNAi" id="80177"/>
<dbReference type="Pharos" id="Q8N699">
    <property type="development level" value="Tbio"/>
</dbReference>
<dbReference type="PRO" id="PR:Q8N699"/>
<dbReference type="Proteomes" id="UP000005640">
    <property type="component" value="Chromosome 6"/>
</dbReference>
<dbReference type="RNAct" id="Q8N699">
    <property type="molecule type" value="protein"/>
</dbReference>
<dbReference type="Bgee" id="ENSG00000120279">
    <property type="expression patterns" value="Expressed in lower lobe of lung and 167 other cell types or tissues"/>
</dbReference>
<dbReference type="ExpressionAtlas" id="Q8N699">
    <property type="expression patterns" value="baseline and differential"/>
</dbReference>
<dbReference type="GO" id="GO:0043231">
    <property type="term" value="C:intracellular membrane-bounded organelle"/>
    <property type="evidence" value="ECO:0000314"/>
    <property type="project" value="HPA"/>
</dbReference>
<dbReference type="GO" id="GO:0016604">
    <property type="term" value="C:nuclear body"/>
    <property type="evidence" value="ECO:0000314"/>
    <property type="project" value="HPA"/>
</dbReference>
<dbReference type="GO" id="GO:0005654">
    <property type="term" value="C:nucleoplasm"/>
    <property type="evidence" value="ECO:0000314"/>
    <property type="project" value="HPA"/>
</dbReference>
<dbReference type="GO" id="GO:0061484">
    <property type="term" value="P:hematopoietic stem cell homeostasis"/>
    <property type="evidence" value="ECO:0007669"/>
    <property type="project" value="Ensembl"/>
</dbReference>
<dbReference type="InterPro" id="IPR029180">
    <property type="entry name" value="Myc_target_1"/>
</dbReference>
<dbReference type="PANTHER" id="PTHR14869">
    <property type="entry name" value="MYC TARGET PROTEIN 1"/>
    <property type="match status" value="1"/>
</dbReference>
<dbReference type="PANTHER" id="PTHR14869:SF0">
    <property type="entry name" value="MYC TARGET PROTEIN 1"/>
    <property type="match status" value="1"/>
</dbReference>
<dbReference type="Pfam" id="PF15179">
    <property type="entry name" value="Myc_target_1"/>
    <property type="match status" value="1"/>
</dbReference>
<comment type="function">
    <text evidence="1">May regulate certain MYC target genes, MYC seems to be a direct upstream transcriptional activator. Does not seem to significantly affect growth cell capacity. Overexpression seems to mediate many of the known phenotypic features associated with MYC, including promotion of apoptosis, alteration of morphology, enhancement of anchorage-independent growth, tumorigenic conversion, promotion of genomic instability, and inhibition of hematopoietic differentiation (By similarity).</text>
</comment>
<comment type="subcellular location">
    <subcellularLocation>
        <location evidence="4">Nucleus</location>
    </subcellularLocation>
    <text>Expressed in nuclei of hepatocellular carcinoma cell line BEL-7402 cells.</text>
</comment>
<comment type="tissue specificity">
    <text>Down-regulated in gastric cancer tissues.</text>
</comment>
<comment type="similarity">
    <text evidence="6">Belongs to the MYCT1 family.</text>
</comment>
<comment type="caution">
    <text evidence="6">It is uncertain whether Met-1 or Met-49 is the initiator.</text>
</comment>
<gene>
    <name type="primary">MYCT1</name>
    <name type="synonym">MTLC</name>
    <name type="synonym">MTMC1</name>
</gene>